<reference key="1">
    <citation type="journal article" date="2000" name="Nature">
        <title>Complete DNA sequence of a serogroup A strain of Neisseria meningitidis Z2491.</title>
        <authorList>
            <person name="Parkhill J."/>
            <person name="Achtman M."/>
            <person name="James K.D."/>
            <person name="Bentley S.D."/>
            <person name="Churcher C.M."/>
            <person name="Klee S.R."/>
            <person name="Morelli G."/>
            <person name="Basham D."/>
            <person name="Brown D."/>
            <person name="Chillingworth T."/>
            <person name="Davies R.M."/>
            <person name="Davis P."/>
            <person name="Devlin K."/>
            <person name="Feltwell T."/>
            <person name="Hamlin N."/>
            <person name="Holroyd S."/>
            <person name="Jagels K."/>
            <person name="Leather S."/>
            <person name="Moule S."/>
            <person name="Mungall K.L."/>
            <person name="Quail M.A."/>
            <person name="Rajandream M.A."/>
            <person name="Rutherford K.M."/>
            <person name="Simmonds M."/>
            <person name="Skelton J."/>
            <person name="Whitehead S."/>
            <person name="Spratt B.G."/>
            <person name="Barrell B.G."/>
        </authorList>
    </citation>
    <scope>NUCLEOTIDE SEQUENCE [LARGE SCALE GENOMIC DNA]</scope>
    <source>
        <strain>DSM 15465 / Z2491</strain>
    </source>
</reference>
<sequence length="950" mass="104070">MKLSELFNPNEFAARHLSFGDEAALLAAVDEKSMDEFVGNTVPQSIRMPSELDLPEALTEADALAKLKGIASKNMINKSYIGLGYYPTRVPNVILRNVLENPGWYTAYTPYQAEIAQGRLEALLNFQQVCIDLTGFPVAGASLLDEATAAAEAMAMAHRVGKVKSERFFVDERVYPQTLDVMKTRAKYFGFELVVGDFAQADEGEYFGALFQYVGKDGDVQDLQDVIGRLKAKGTIVAVAADIMSLVLLKSPAELGADIALGNTQRFGVPMGFGGPHAAYFAFKDEFKRSAPGRIIGVSKDASGKPALRMALSTREQHIRREKATSNICTAQALLANLAGMYAVYHGPKGVKRIADRIHALASAFADALVSDGLNVVHKVFFDTVTVDFGNKEKADQVFAAALESGYNLRRVNDTQVAAAFHETSACEDLVDLYRAFTGKDTFAFADDVKGRLNAELLRQDDILQHPVFNSYHTEHEMLRYLKKLEDRDLAMNRSMISLGSCTMKLNATAEMLPITWAEFSDIHPYAPEAQTAGYRELLADMENSLKAITGFDAISLQPNSGAQGEYTGMLSIRRYQEAQGEAHRNICLIPKSAHGTNPATAAMLGLKVVVVDTDEHGNVNIDDLKAKAEQHRDALSAIMITYPSTHGVYEEGIRDICRIIHENGGQVYMDGANLNAQIGIMQPAEVGADVLHMNLHKTFCIPHGGGGPGMGPIGLKAHLAPFAPGHTLTDTHSASAGQTAVAAAAYGSASILPITWMYLTMMGKQGMEQATRWALLNANYVAKRLSEDYPILYTGKNGRVAHECIVDLRPLKAESGITETDIAKRLMDYGFHAPTVSFPVAGTLMIEPTESESKAELDRFIATLKSIRREVQKVIDGEWPKDDNPLVNAPHTAADITGNWAHPYSREEAVFPLPFVREHKFWPFVNRVDDVYGDRNLVCSCPPMENYED</sequence>
<gene>
    <name evidence="1" type="primary">gcvP</name>
    <name type="ordered locus">NMA1934</name>
</gene>
<accession>Q9JT86</accession>
<accession>A1ITD3</accession>
<proteinExistence type="inferred from homology"/>
<evidence type="ECO:0000255" key="1">
    <source>
        <dbReference type="HAMAP-Rule" id="MF_00711"/>
    </source>
</evidence>
<organism>
    <name type="scientific">Neisseria meningitidis serogroup A / serotype 4A (strain DSM 15465 / Z2491)</name>
    <dbReference type="NCBI Taxonomy" id="122587"/>
    <lineage>
        <taxon>Bacteria</taxon>
        <taxon>Pseudomonadati</taxon>
        <taxon>Pseudomonadota</taxon>
        <taxon>Betaproteobacteria</taxon>
        <taxon>Neisseriales</taxon>
        <taxon>Neisseriaceae</taxon>
        <taxon>Neisseria</taxon>
    </lineage>
</organism>
<comment type="function">
    <text evidence="1">The glycine cleavage system catalyzes the degradation of glycine. The P protein binds the alpha-amino group of glycine through its pyridoxal phosphate cofactor; CO(2) is released and the remaining methylamine moiety is then transferred to the lipoamide cofactor of the H protein.</text>
</comment>
<comment type="catalytic activity">
    <reaction evidence="1">
        <text>N(6)-[(R)-lipoyl]-L-lysyl-[glycine-cleavage complex H protein] + glycine + H(+) = N(6)-[(R)-S(8)-aminomethyldihydrolipoyl]-L-lysyl-[glycine-cleavage complex H protein] + CO2</text>
        <dbReference type="Rhea" id="RHEA:24304"/>
        <dbReference type="Rhea" id="RHEA-COMP:10494"/>
        <dbReference type="Rhea" id="RHEA-COMP:10495"/>
        <dbReference type="ChEBI" id="CHEBI:15378"/>
        <dbReference type="ChEBI" id="CHEBI:16526"/>
        <dbReference type="ChEBI" id="CHEBI:57305"/>
        <dbReference type="ChEBI" id="CHEBI:83099"/>
        <dbReference type="ChEBI" id="CHEBI:83143"/>
        <dbReference type="EC" id="1.4.4.2"/>
    </reaction>
</comment>
<comment type="cofactor">
    <cofactor evidence="1">
        <name>pyridoxal 5'-phosphate</name>
        <dbReference type="ChEBI" id="CHEBI:597326"/>
    </cofactor>
</comment>
<comment type="subunit">
    <text evidence="1">The glycine cleavage system is composed of four proteins: P, T, L and H.</text>
</comment>
<comment type="similarity">
    <text evidence="1">Belongs to the GcvP family.</text>
</comment>
<protein>
    <recommendedName>
        <fullName evidence="1">Glycine dehydrogenase (decarboxylating)</fullName>
        <ecNumber evidence="1">1.4.4.2</ecNumber>
    </recommendedName>
    <alternativeName>
        <fullName evidence="1">Glycine cleavage system P-protein</fullName>
    </alternativeName>
    <alternativeName>
        <fullName evidence="1">Glycine decarboxylase</fullName>
    </alternativeName>
    <alternativeName>
        <fullName evidence="1">Glycine dehydrogenase (aminomethyl-transferring)</fullName>
    </alternativeName>
</protein>
<keyword id="KW-0560">Oxidoreductase</keyword>
<keyword id="KW-0663">Pyridoxal phosphate</keyword>
<feature type="chain" id="PRO_0000166921" description="Glycine dehydrogenase (decarboxylating)">
    <location>
        <begin position="1"/>
        <end position="950"/>
    </location>
</feature>
<feature type="modified residue" description="N6-(pyridoxal phosphate)lysine" evidence="1">
    <location>
        <position position="698"/>
    </location>
</feature>
<dbReference type="EC" id="1.4.4.2" evidence="1"/>
<dbReference type="EMBL" id="AL157959">
    <property type="protein sequence ID" value="CAM09047.1"/>
    <property type="molecule type" value="Genomic_DNA"/>
</dbReference>
<dbReference type="PIR" id="D81821">
    <property type="entry name" value="D81821"/>
</dbReference>
<dbReference type="RefSeq" id="WP_002247035.1">
    <property type="nucleotide sequence ID" value="NC_003116.1"/>
</dbReference>
<dbReference type="SMR" id="Q9JT86"/>
<dbReference type="EnsemblBacteria" id="CAM09047">
    <property type="protein sequence ID" value="CAM09047"/>
    <property type="gene ID" value="NMA1934"/>
</dbReference>
<dbReference type="KEGG" id="nma:NMA1934"/>
<dbReference type="HOGENOM" id="CLU_004620_3_2_4"/>
<dbReference type="Proteomes" id="UP000000626">
    <property type="component" value="Chromosome"/>
</dbReference>
<dbReference type="GO" id="GO:0005829">
    <property type="term" value="C:cytosol"/>
    <property type="evidence" value="ECO:0007669"/>
    <property type="project" value="TreeGrafter"/>
</dbReference>
<dbReference type="GO" id="GO:0005960">
    <property type="term" value="C:glycine cleavage complex"/>
    <property type="evidence" value="ECO:0007669"/>
    <property type="project" value="TreeGrafter"/>
</dbReference>
<dbReference type="GO" id="GO:0016594">
    <property type="term" value="F:glycine binding"/>
    <property type="evidence" value="ECO:0007669"/>
    <property type="project" value="TreeGrafter"/>
</dbReference>
<dbReference type="GO" id="GO:0004375">
    <property type="term" value="F:glycine dehydrogenase (decarboxylating) activity"/>
    <property type="evidence" value="ECO:0007669"/>
    <property type="project" value="UniProtKB-EC"/>
</dbReference>
<dbReference type="GO" id="GO:0030170">
    <property type="term" value="F:pyridoxal phosphate binding"/>
    <property type="evidence" value="ECO:0007669"/>
    <property type="project" value="TreeGrafter"/>
</dbReference>
<dbReference type="GO" id="GO:0019464">
    <property type="term" value="P:glycine decarboxylation via glycine cleavage system"/>
    <property type="evidence" value="ECO:0007669"/>
    <property type="project" value="UniProtKB-UniRule"/>
</dbReference>
<dbReference type="FunFam" id="3.40.640.10:FF:000005">
    <property type="entry name" value="Glycine dehydrogenase (decarboxylating), mitochondrial"/>
    <property type="match status" value="1"/>
</dbReference>
<dbReference type="FunFam" id="3.90.1150.10:FF:000007">
    <property type="entry name" value="Glycine dehydrogenase (decarboxylating), mitochondrial"/>
    <property type="match status" value="1"/>
</dbReference>
<dbReference type="FunFam" id="3.40.640.10:FF:000007">
    <property type="entry name" value="glycine dehydrogenase (Decarboxylating), mitochondrial"/>
    <property type="match status" value="1"/>
</dbReference>
<dbReference type="Gene3D" id="3.90.1150.10">
    <property type="entry name" value="Aspartate Aminotransferase, domain 1"/>
    <property type="match status" value="2"/>
</dbReference>
<dbReference type="Gene3D" id="3.40.640.10">
    <property type="entry name" value="Type I PLP-dependent aspartate aminotransferase-like (Major domain)"/>
    <property type="match status" value="2"/>
</dbReference>
<dbReference type="HAMAP" id="MF_00711">
    <property type="entry name" value="GcvP"/>
    <property type="match status" value="1"/>
</dbReference>
<dbReference type="InterPro" id="IPR003437">
    <property type="entry name" value="GcvP"/>
</dbReference>
<dbReference type="InterPro" id="IPR049316">
    <property type="entry name" value="GDC-P_C"/>
</dbReference>
<dbReference type="InterPro" id="IPR049315">
    <property type="entry name" value="GDC-P_N"/>
</dbReference>
<dbReference type="InterPro" id="IPR020581">
    <property type="entry name" value="GDC_P"/>
</dbReference>
<dbReference type="InterPro" id="IPR015424">
    <property type="entry name" value="PyrdxlP-dep_Trfase"/>
</dbReference>
<dbReference type="InterPro" id="IPR015421">
    <property type="entry name" value="PyrdxlP-dep_Trfase_major"/>
</dbReference>
<dbReference type="InterPro" id="IPR015422">
    <property type="entry name" value="PyrdxlP-dep_Trfase_small"/>
</dbReference>
<dbReference type="NCBIfam" id="TIGR00461">
    <property type="entry name" value="gcvP"/>
    <property type="match status" value="1"/>
</dbReference>
<dbReference type="NCBIfam" id="NF003346">
    <property type="entry name" value="PRK04366.1"/>
    <property type="match status" value="1"/>
</dbReference>
<dbReference type="PANTHER" id="PTHR11773:SF13">
    <property type="entry name" value="GLYCINE DEHYDROGENASE (DECARBOXYLATING)"/>
    <property type="match status" value="1"/>
</dbReference>
<dbReference type="PANTHER" id="PTHR11773">
    <property type="entry name" value="GLYCINE DEHYDROGENASE, DECARBOXYLATING"/>
    <property type="match status" value="1"/>
</dbReference>
<dbReference type="Pfam" id="PF21478">
    <property type="entry name" value="GcvP2_C"/>
    <property type="match status" value="1"/>
</dbReference>
<dbReference type="Pfam" id="PF02347">
    <property type="entry name" value="GDC-P"/>
    <property type="match status" value="2"/>
</dbReference>
<dbReference type="SUPFAM" id="SSF53383">
    <property type="entry name" value="PLP-dependent transferases"/>
    <property type="match status" value="2"/>
</dbReference>
<name>GCSP_NEIMA</name>